<gene>
    <name type="primary">UTP10</name>
    <name type="ordered locus">CNI01790</name>
</gene>
<comment type="function">
    <text evidence="1">Involved in nucleolar processing of pre-18S ribosomal RNA. Involved in ribosome biosynthesis (By similarity).</text>
</comment>
<comment type="subunit">
    <text evidence="1">Component of the ribosomal small subunit (SSU) processome.</text>
</comment>
<comment type="subcellular location">
    <subcellularLocation>
        <location evidence="1">Nucleus</location>
        <location evidence="1">Nucleolus</location>
    </subcellularLocation>
</comment>
<comment type="similarity">
    <text evidence="2">Belongs to the HEATR1/UTP10 family.</text>
</comment>
<dbReference type="EMBL" id="AE017349">
    <property type="protein sequence ID" value="AAW45540.1"/>
    <property type="molecule type" value="Genomic_DNA"/>
</dbReference>
<dbReference type="RefSeq" id="XP_572847.1">
    <property type="nucleotide sequence ID" value="XM_572847.1"/>
</dbReference>
<dbReference type="SMR" id="P0CO14"/>
<dbReference type="FunCoup" id="P0CO14">
    <property type="interactions" value="637"/>
</dbReference>
<dbReference type="STRING" id="214684.P0CO14"/>
<dbReference type="PaxDb" id="214684-P0CO14"/>
<dbReference type="EnsemblFungi" id="AAW45540">
    <property type="protein sequence ID" value="AAW45540"/>
    <property type="gene ID" value="CNI01790"/>
</dbReference>
<dbReference type="GeneID" id="3259411"/>
<dbReference type="KEGG" id="cne:CNI01790"/>
<dbReference type="VEuPathDB" id="FungiDB:CNI01790"/>
<dbReference type="eggNOG" id="KOG1837">
    <property type="taxonomic scope" value="Eukaryota"/>
</dbReference>
<dbReference type="HOGENOM" id="CLU_001128_0_0_1"/>
<dbReference type="InParanoid" id="P0CO14"/>
<dbReference type="OMA" id="NDVMWKQ"/>
<dbReference type="OrthoDB" id="31183at2759"/>
<dbReference type="Proteomes" id="UP000002149">
    <property type="component" value="Chromosome 9"/>
</dbReference>
<dbReference type="GO" id="GO:0030686">
    <property type="term" value="C:90S preribosome"/>
    <property type="evidence" value="ECO:0000318"/>
    <property type="project" value="GO_Central"/>
</dbReference>
<dbReference type="GO" id="GO:0032040">
    <property type="term" value="C:small-subunit processome"/>
    <property type="evidence" value="ECO:0000318"/>
    <property type="project" value="GO_Central"/>
</dbReference>
<dbReference type="GO" id="GO:0034455">
    <property type="term" value="C:t-UTP complex"/>
    <property type="evidence" value="ECO:0000318"/>
    <property type="project" value="GO_Central"/>
</dbReference>
<dbReference type="GO" id="GO:0030515">
    <property type="term" value="F:snoRNA binding"/>
    <property type="evidence" value="ECO:0000318"/>
    <property type="project" value="GO_Central"/>
</dbReference>
<dbReference type="GO" id="GO:0000462">
    <property type="term" value="P:maturation of SSU-rRNA from tricistronic rRNA transcript (SSU-rRNA, 5.8S rRNA, LSU-rRNA)"/>
    <property type="evidence" value="ECO:0000318"/>
    <property type="project" value="GO_Central"/>
</dbReference>
<dbReference type="GO" id="GO:0045943">
    <property type="term" value="P:positive regulation of transcription by RNA polymerase I"/>
    <property type="evidence" value="ECO:0000318"/>
    <property type="project" value="GO_Central"/>
</dbReference>
<dbReference type="Gene3D" id="1.25.10.10">
    <property type="entry name" value="Leucine-rich Repeat Variant"/>
    <property type="match status" value="1"/>
</dbReference>
<dbReference type="InterPro" id="IPR011989">
    <property type="entry name" value="ARM-like"/>
</dbReference>
<dbReference type="InterPro" id="IPR016024">
    <property type="entry name" value="ARM-type_fold"/>
</dbReference>
<dbReference type="InterPro" id="IPR012954">
    <property type="entry name" value="BP28_C_dom"/>
</dbReference>
<dbReference type="InterPro" id="IPR056473">
    <property type="entry name" value="HEAT_Utp10/HEAT1"/>
</dbReference>
<dbReference type="InterPro" id="IPR022125">
    <property type="entry name" value="U3snoRNP10_N"/>
</dbReference>
<dbReference type="InterPro" id="IPR040191">
    <property type="entry name" value="UTP10"/>
</dbReference>
<dbReference type="PANTHER" id="PTHR13457">
    <property type="entry name" value="BAP28"/>
    <property type="match status" value="1"/>
</dbReference>
<dbReference type="PANTHER" id="PTHR13457:SF1">
    <property type="entry name" value="HEAT REPEAT-CONTAINING PROTEIN 1"/>
    <property type="match status" value="1"/>
</dbReference>
<dbReference type="Pfam" id="PF08146">
    <property type="entry name" value="BP28CT"/>
    <property type="match status" value="1"/>
</dbReference>
<dbReference type="Pfam" id="PF23243">
    <property type="entry name" value="HEAT_HEATR1"/>
    <property type="match status" value="1"/>
</dbReference>
<dbReference type="Pfam" id="PF12397">
    <property type="entry name" value="U3snoRNP10"/>
    <property type="match status" value="1"/>
</dbReference>
<dbReference type="SMART" id="SM01036">
    <property type="entry name" value="BP28CT"/>
    <property type="match status" value="1"/>
</dbReference>
<dbReference type="SUPFAM" id="SSF48371">
    <property type="entry name" value="ARM repeat"/>
    <property type="match status" value="2"/>
</dbReference>
<keyword id="KW-0539">Nucleus</keyword>
<keyword id="KW-1185">Reference proteome</keyword>
<keyword id="KW-0677">Repeat</keyword>
<keyword id="KW-0687">Ribonucleoprotein</keyword>
<keyword id="KW-0690">Ribosome biogenesis</keyword>
<keyword id="KW-0698">rRNA processing</keyword>
<reference key="1">
    <citation type="journal article" date="2005" name="Science">
        <title>The genome of the basidiomycetous yeast and human pathogen Cryptococcus neoformans.</title>
        <authorList>
            <person name="Loftus B.J."/>
            <person name="Fung E."/>
            <person name="Roncaglia P."/>
            <person name="Rowley D."/>
            <person name="Amedeo P."/>
            <person name="Bruno D."/>
            <person name="Vamathevan J."/>
            <person name="Miranda M."/>
            <person name="Anderson I.J."/>
            <person name="Fraser J.A."/>
            <person name="Allen J.E."/>
            <person name="Bosdet I.E."/>
            <person name="Brent M.R."/>
            <person name="Chiu R."/>
            <person name="Doering T.L."/>
            <person name="Donlin M.J."/>
            <person name="D'Souza C.A."/>
            <person name="Fox D.S."/>
            <person name="Grinberg V."/>
            <person name="Fu J."/>
            <person name="Fukushima M."/>
            <person name="Haas B.J."/>
            <person name="Huang J.C."/>
            <person name="Janbon G."/>
            <person name="Jones S.J.M."/>
            <person name="Koo H.L."/>
            <person name="Krzywinski M.I."/>
            <person name="Kwon-Chung K.J."/>
            <person name="Lengeler K.B."/>
            <person name="Maiti R."/>
            <person name="Marra M.A."/>
            <person name="Marra R.E."/>
            <person name="Mathewson C.A."/>
            <person name="Mitchell T.G."/>
            <person name="Pertea M."/>
            <person name="Riggs F.R."/>
            <person name="Salzberg S.L."/>
            <person name="Schein J.E."/>
            <person name="Shvartsbeyn A."/>
            <person name="Shin H."/>
            <person name="Shumway M."/>
            <person name="Specht C.A."/>
            <person name="Suh B.B."/>
            <person name="Tenney A."/>
            <person name="Utterback T.R."/>
            <person name="Wickes B.L."/>
            <person name="Wortman J.R."/>
            <person name="Wye N.H."/>
            <person name="Kronstad J.W."/>
            <person name="Lodge J.K."/>
            <person name="Heitman J."/>
            <person name="Davis R.W."/>
            <person name="Fraser C.M."/>
            <person name="Hyman R.W."/>
        </authorList>
    </citation>
    <scope>NUCLEOTIDE SEQUENCE [LARGE SCALE GENOMIC DNA]</scope>
    <source>
        <strain>JEC21 / ATCC MYA-565</strain>
    </source>
</reference>
<sequence>MSSLAQQLQSIASLDAARLTSAYGAPSGKSYLFPPDVASSHDIDSIFDLAQSGFDELLSLDPEMEEFEEELFSESAKRTDRMVLSKEENDNLDRTLGRCLRRLGKWIRLMAGGKCIEWMVRRFRVHEMNVDEVLRSFLPYHESPNFPRILAIVTIPKTSPYYATFAPLVKNAQPIPRSYIVTSISPAKDKSLVLLGDIASMVQQAVKEGVVHHALLTFWTATMVDLLEGARHGKGANEGVVKQLVESFVTLLETPKAGEDVNAAVYPPLVLLTRTVPLADEPFLAIVSSLLTPGTGSNPSQRMLTLLVILNDRHTWSLGLGEHATENLAKVSQLGEILVAAMDKYRFEKALNIVVKSMLEKPDLHAKALATVLEHESLPTSVTELASTNLLQLGSSTDSQEVKAACKSLLTNLRERHPSIVDTAFLQASASLEIDTHPVDHGLVQKPSGEVAFLDVYAADISSRVTGVKSVIDMAKKGEEIESSITALEARLSDVDENVVNALYEEPKSLLEILPVEKYIAGVKPVFWAVSPISHIIGLHLDFISQHLLVSHPEAGKQIYESLLFPIFLSTEKRQPLTKSQALKLLNGGFKKLDKLSTIGPEIGKAREEGMKGAQKGNLVIAKALAGATLSSSTFEDDISFLIAQLDSTTSSARLLAYLILHSLVLTLRGPRQLSTSLSILKYLSPRLTGHSLRDLKHADENVNTEYMESVYKKPEETRTTLRAIVSILAAMGKVIKPIGQIVWLSGESKAKDASYKTFAQQIYLWANIAILPANVAHFLLRSLLTQLGEEALLFFSSIWTSSTSPVPLRISALKHALAFIHAYATLPTSPAAQGQPVDFQVVLPQILIALQDSDKDVRRVAVDVLRSVEGGEGMGDVYALDTIYGDRSEMTQLLKSVDRKKYIETLLEVAEEFVIDRLRLKAFHTEVLNMQSGKNRKESAHRRAIIGFLMSHVASYRAIDPRLVLLSLLSDVHDTSILRSAIPLLASLFDDKSEESLWLSSLPDGQQALYVQALMGSLRVQSVSVLGEAGGEGWEFLLNLLDASKSSRFIARLRILSFKAMVGGVFSALEAHQQIEYIIALIQCIHALPTDDALDAVKVLEKLDIQPRVLIELIEHLSDPLETSVNRKRQRQDAADEDRPTQAVHELITFVDSRNWPSIPASAPLVASLMSILSALLAKRLIVKEGIDYLEQEVFGAILALVERITDAQEIQRAHVGIEVVIKVIRASTNPRTAQRALLVASELARLIPDAVLHNVMPIFTFMGASDFQRDDAYTFGVVEKTVSRIVPVMTQSLKEKAQNSLELYTKSLTFLSIFTDMAGRLPRHRTLPFFVHLVKSLGASDYLAPVCMLLVDRATTKAGRNKESVSTALELPANLVAAFDVSVKTQVLGEIVQELARLIGDLSKADKEAFLSQTISENDATDRPLRQVTYLLSFLSSILGQLRGKACSQALVQSAVRQLIVLAASTSQPVMATTDIPSNLHKTLASTMLLLSADNFLGVTAELLSDGSEQDIIMSLGVFAERLPLIKSEVRLRCTKVIAEILKRIGDLLAASGATVNAALEAVKSVTKTAIAQEDGALASVLPTVVGCIGKVKDSAVIVAALSLVELLVRRLAARTIPFIQSILDTSLNLIKSTKLAATATNQAFVTLSSVIETIPTFISSKQLNAILITTIDYRRVEETNSASLFTTLAKKIRTKSLFPVLIEAWKTVQEKGGDNEMKGFFEMLRLTLKNAAREDLPSMLKPVFAFFLDVFDLRHRLQLKGVDTRVVNDVEESAIGSFLELVTKLNEPTFKPLFIRLYDWAVIDLAEGKNADDGRLTERKIVLLHVMMGLLTKFKNLLSPYMGILFPHIQELLPAFASGSVRSEPLWTLLLNVLGKSFEVDSGAFWTDALEIELLPQLVAQVPLFLPIAPSPQSPRPISSCLANLAGSTTAENVLRRLNTAVCLATRSDDPKVRLAALDALSAIWDAQAEEMVGLVPETVSEFLAELLEDESKDVEIAARGVLAKIEKVTGSLKEYLE</sequence>
<feature type="chain" id="PRO_0000308502" description="U3 small nucleolar RNA-associated protein 10">
    <location>
        <begin position="1"/>
        <end position="2021"/>
    </location>
</feature>
<feature type="repeat" description="HEAT 1">
    <location>
        <begin position="837"/>
        <end position="875"/>
    </location>
</feature>
<feature type="repeat" description="HEAT 2">
    <location>
        <begin position="976"/>
        <end position="1014"/>
    </location>
</feature>
<feature type="repeat" description="HEAT 3">
    <location>
        <begin position="1281"/>
        <end position="1319"/>
    </location>
</feature>
<feature type="repeat" description="HEAT 4">
    <location>
        <begin position="1935"/>
        <end position="1973"/>
    </location>
</feature>
<feature type="repeat" description="HEAT 5">
    <location>
        <begin position="1977"/>
        <end position="2015"/>
    </location>
</feature>
<proteinExistence type="inferred from homology"/>
<protein>
    <recommendedName>
        <fullName>U3 small nucleolar RNA-associated protein 10</fullName>
    </recommendedName>
</protein>
<name>UTP10_CRYNJ</name>
<organism>
    <name type="scientific">Cryptococcus neoformans var. neoformans serotype D (strain JEC21 / ATCC MYA-565)</name>
    <name type="common">Filobasidiella neoformans</name>
    <dbReference type="NCBI Taxonomy" id="214684"/>
    <lineage>
        <taxon>Eukaryota</taxon>
        <taxon>Fungi</taxon>
        <taxon>Dikarya</taxon>
        <taxon>Basidiomycota</taxon>
        <taxon>Agaricomycotina</taxon>
        <taxon>Tremellomycetes</taxon>
        <taxon>Tremellales</taxon>
        <taxon>Cryptococcaceae</taxon>
        <taxon>Cryptococcus</taxon>
        <taxon>Cryptococcus neoformans species complex</taxon>
    </lineage>
</organism>
<accession>P0CO14</accession>
<accession>Q55NB7</accession>
<accession>Q5KBQ2</accession>
<evidence type="ECO:0000250" key="1"/>
<evidence type="ECO:0000305" key="2"/>